<dbReference type="EC" id="2.7.7.6" evidence="1"/>
<dbReference type="EMBL" id="CP000450">
    <property type="protein sequence ID" value="ABI60028.1"/>
    <property type="molecule type" value="Genomic_DNA"/>
</dbReference>
<dbReference type="RefSeq" id="WP_011634834.1">
    <property type="nucleotide sequence ID" value="NC_008344.1"/>
</dbReference>
<dbReference type="SMR" id="Q0AF54"/>
<dbReference type="STRING" id="335283.Neut_1794"/>
<dbReference type="KEGG" id="net:Neut_1794"/>
<dbReference type="eggNOG" id="COG0086">
    <property type="taxonomic scope" value="Bacteria"/>
</dbReference>
<dbReference type="HOGENOM" id="CLU_000524_3_1_4"/>
<dbReference type="OrthoDB" id="9815296at2"/>
<dbReference type="Proteomes" id="UP000001966">
    <property type="component" value="Chromosome"/>
</dbReference>
<dbReference type="GO" id="GO:0000428">
    <property type="term" value="C:DNA-directed RNA polymerase complex"/>
    <property type="evidence" value="ECO:0007669"/>
    <property type="project" value="UniProtKB-KW"/>
</dbReference>
<dbReference type="GO" id="GO:0003677">
    <property type="term" value="F:DNA binding"/>
    <property type="evidence" value="ECO:0007669"/>
    <property type="project" value="UniProtKB-UniRule"/>
</dbReference>
<dbReference type="GO" id="GO:0003899">
    <property type="term" value="F:DNA-directed RNA polymerase activity"/>
    <property type="evidence" value="ECO:0007669"/>
    <property type="project" value="UniProtKB-UniRule"/>
</dbReference>
<dbReference type="GO" id="GO:0000287">
    <property type="term" value="F:magnesium ion binding"/>
    <property type="evidence" value="ECO:0007669"/>
    <property type="project" value="UniProtKB-UniRule"/>
</dbReference>
<dbReference type="GO" id="GO:0008270">
    <property type="term" value="F:zinc ion binding"/>
    <property type="evidence" value="ECO:0007669"/>
    <property type="project" value="UniProtKB-UniRule"/>
</dbReference>
<dbReference type="GO" id="GO:0006351">
    <property type="term" value="P:DNA-templated transcription"/>
    <property type="evidence" value="ECO:0007669"/>
    <property type="project" value="UniProtKB-UniRule"/>
</dbReference>
<dbReference type="CDD" id="cd02655">
    <property type="entry name" value="RNAP_beta'_C"/>
    <property type="match status" value="1"/>
</dbReference>
<dbReference type="CDD" id="cd01609">
    <property type="entry name" value="RNAP_beta'_N"/>
    <property type="match status" value="1"/>
</dbReference>
<dbReference type="FunFam" id="1.10.132.30:FF:000003">
    <property type="entry name" value="DNA-directed RNA polymerase subunit beta"/>
    <property type="match status" value="1"/>
</dbReference>
<dbReference type="FunFam" id="1.10.150.390:FF:000002">
    <property type="entry name" value="DNA-directed RNA polymerase subunit beta"/>
    <property type="match status" value="1"/>
</dbReference>
<dbReference type="FunFam" id="4.10.860.120:FF:000001">
    <property type="entry name" value="DNA-directed RNA polymerase subunit beta"/>
    <property type="match status" value="1"/>
</dbReference>
<dbReference type="Gene3D" id="1.10.132.30">
    <property type="match status" value="1"/>
</dbReference>
<dbReference type="Gene3D" id="1.10.150.390">
    <property type="match status" value="1"/>
</dbReference>
<dbReference type="Gene3D" id="1.10.1790.20">
    <property type="match status" value="1"/>
</dbReference>
<dbReference type="Gene3D" id="1.10.40.90">
    <property type="match status" value="1"/>
</dbReference>
<dbReference type="Gene3D" id="2.40.40.20">
    <property type="match status" value="1"/>
</dbReference>
<dbReference type="Gene3D" id="2.40.50.100">
    <property type="match status" value="3"/>
</dbReference>
<dbReference type="Gene3D" id="4.10.860.120">
    <property type="entry name" value="RNA polymerase II, clamp domain"/>
    <property type="match status" value="1"/>
</dbReference>
<dbReference type="Gene3D" id="1.10.274.100">
    <property type="entry name" value="RNA polymerase Rpb1, domain 3"/>
    <property type="match status" value="1"/>
</dbReference>
<dbReference type="HAMAP" id="MF_01322">
    <property type="entry name" value="RNApol_bact_RpoC"/>
    <property type="match status" value="1"/>
</dbReference>
<dbReference type="InterPro" id="IPR045867">
    <property type="entry name" value="DNA-dir_RpoC_beta_prime"/>
</dbReference>
<dbReference type="InterPro" id="IPR012754">
    <property type="entry name" value="DNA-dir_RpoC_beta_prime_bact"/>
</dbReference>
<dbReference type="InterPro" id="IPR000722">
    <property type="entry name" value="RNA_pol_asu"/>
</dbReference>
<dbReference type="InterPro" id="IPR006592">
    <property type="entry name" value="RNA_pol_N"/>
</dbReference>
<dbReference type="InterPro" id="IPR007080">
    <property type="entry name" value="RNA_pol_Rpb1_1"/>
</dbReference>
<dbReference type="InterPro" id="IPR007066">
    <property type="entry name" value="RNA_pol_Rpb1_3"/>
</dbReference>
<dbReference type="InterPro" id="IPR042102">
    <property type="entry name" value="RNA_pol_Rpb1_3_sf"/>
</dbReference>
<dbReference type="InterPro" id="IPR007083">
    <property type="entry name" value="RNA_pol_Rpb1_4"/>
</dbReference>
<dbReference type="InterPro" id="IPR007081">
    <property type="entry name" value="RNA_pol_Rpb1_5"/>
</dbReference>
<dbReference type="InterPro" id="IPR044893">
    <property type="entry name" value="RNA_pol_Rpb1_clamp_domain"/>
</dbReference>
<dbReference type="InterPro" id="IPR038120">
    <property type="entry name" value="Rpb1_funnel_sf"/>
</dbReference>
<dbReference type="NCBIfam" id="TIGR02386">
    <property type="entry name" value="rpoC_TIGR"/>
    <property type="match status" value="1"/>
</dbReference>
<dbReference type="PANTHER" id="PTHR19376">
    <property type="entry name" value="DNA-DIRECTED RNA POLYMERASE"/>
    <property type="match status" value="1"/>
</dbReference>
<dbReference type="PANTHER" id="PTHR19376:SF54">
    <property type="entry name" value="DNA-DIRECTED RNA POLYMERASE SUBUNIT BETA"/>
    <property type="match status" value="1"/>
</dbReference>
<dbReference type="Pfam" id="PF04997">
    <property type="entry name" value="RNA_pol_Rpb1_1"/>
    <property type="match status" value="1"/>
</dbReference>
<dbReference type="Pfam" id="PF00623">
    <property type="entry name" value="RNA_pol_Rpb1_2"/>
    <property type="match status" value="2"/>
</dbReference>
<dbReference type="Pfam" id="PF04983">
    <property type="entry name" value="RNA_pol_Rpb1_3"/>
    <property type="match status" value="1"/>
</dbReference>
<dbReference type="Pfam" id="PF05000">
    <property type="entry name" value="RNA_pol_Rpb1_4"/>
    <property type="match status" value="1"/>
</dbReference>
<dbReference type="Pfam" id="PF04998">
    <property type="entry name" value="RNA_pol_Rpb1_5"/>
    <property type="match status" value="1"/>
</dbReference>
<dbReference type="SMART" id="SM00663">
    <property type="entry name" value="RPOLA_N"/>
    <property type="match status" value="1"/>
</dbReference>
<dbReference type="SUPFAM" id="SSF64484">
    <property type="entry name" value="beta and beta-prime subunits of DNA dependent RNA-polymerase"/>
    <property type="match status" value="1"/>
</dbReference>
<reference key="1">
    <citation type="journal article" date="2007" name="Environ. Microbiol.">
        <title>Whole-genome analysis of the ammonia-oxidizing bacterium, Nitrosomonas eutropha C91: implications for niche adaptation.</title>
        <authorList>
            <person name="Stein L.Y."/>
            <person name="Arp D.J."/>
            <person name="Berube P.M."/>
            <person name="Chain P.S."/>
            <person name="Hauser L."/>
            <person name="Jetten M.S."/>
            <person name="Klotz M.G."/>
            <person name="Larimer F.W."/>
            <person name="Norton J.M."/>
            <person name="Op den Camp H.J.M."/>
            <person name="Shin M."/>
            <person name="Wei X."/>
        </authorList>
    </citation>
    <scope>NUCLEOTIDE SEQUENCE [LARGE SCALE GENOMIC DNA]</scope>
    <source>
        <strain>DSM 101675 / C91 / Nm57</strain>
    </source>
</reference>
<keyword id="KW-0240">DNA-directed RNA polymerase</keyword>
<keyword id="KW-0460">Magnesium</keyword>
<keyword id="KW-0479">Metal-binding</keyword>
<keyword id="KW-0548">Nucleotidyltransferase</keyword>
<keyword id="KW-0804">Transcription</keyword>
<keyword id="KW-0808">Transferase</keyword>
<keyword id="KW-0862">Zinc</keyword>
<organism>
    <name type="scientific">Nitrosomonas eutropha (strain DSM 101675 / C91 / Nm57)</name>
    <dbReference type="NCBI Taxonomy" id="335283"/>
    <lineage>
        <taxon>Bacteria</taxon>
        <taxon>Pseudomonadati</taxon>
        <taxon>Pseudomonadota</taxon>
        <taxon>Betaproteobacteria</taxon>
        <taxon>Nitrosomonadales</taxon>
        <taxon>Nitrosomonadaceae</taxon>
        <taxon>Nitrosomonas</taxon>
    </lineage>
</organism>
<sequence>MKALLDLFKQVTQKEEFDSIKIGLASPEKIRSWSYGEVKKPETINYRTFKPERDGLFCAKIFGPVKDYECLCGKYKRLKHRGVICEKCGVEVTLSRIRRERMGHIELASPVAHIWFLKSLPSRLGLVLDITLRDIERVLYFEAYIVTDPGMTPLTRGQLLTEDDYLNKTEEFGDDFSAAMGAEGIRALLNSMDILSEIESLRLEIQTTGSETKIKKAAKRLKVLEAFNKSGMKPEWMILTVLPVLPPELRPLVPLDGGRFATSDLNDLYRRVINRNNRLKRLLELRAPEIIIRNEKRMLQESVDSLLDNGRRGKAMTGANKRPLKSLADMIKGKGGRFRQNLLGKRVDYSGRSVIVVGPQLKLHQCGLPKKMALELFKPFIFNKLEVMGVASTIKAAKREVENENPIVWDILEEVIREHPVMLNRAPTLHRLGIQAFEPVLIEGKAIQLHPLVCAAFNADFDGDQMAVHVPLSLEAQMECRTLMLSTNNVLSPANGDPIIVPSQDIVLGLYYMTREKVGAQGEGMVFSDVSEITRAYESKALELNARITVRIKEKKKSCGHGEDPIETITRFETTVGRALISEILPAGLPFALVNKTLKKKEISKLINASFRLCGLRETVIFADKLMYSGFSYATRGGISICLDDLVTPSQKTGIIQAAEQEIHEIANQYISGLVTQGERYNKVVDIWARAGDQVAKAMMDQLSVEPVKDQETGEIRTDKNGQAVTQESFNSIYMMADSGARGSAAQIRQLSGMRGLMAKPDGSIIETPITANFREGLNILQYFISTHGARKGLADTALKTANSGYLTRRLVDVTQDLVIIENDCGTDGGVVMKALVEGGNVVESLRGRILGRVAATDVINPETGEVICSEGTLLDEDTADEIEACSVDEVKVRTPLTCETRYGLCAKCYGRDLGRGTPVNVGEAVGVIAAQSIGEPGTQLTMRTFHIGGAASRAVVANQAESKSNGVVRYSHHIRYVKNAQNELIIISRSGEILIQDENGRERERHKIPYGATLHVQDGETIKAGQILGSWEPHKRPIITEYAGKIRFENVEEGVTVVRQIDEITGMATLVVIDPKRRNIAQSKGLRPLVKFLDENDQEINIPGTDQPVSITFHVGSIITVRDGQQVGIGEVLARIPQETSKTRDITGGLPRVAELFEARVPKDAGFLAEATGTVAFGKDTKGKQRLVITDLDGIAHEYLIPKDKHVTAHDGQVVNKGEVIVDGPIDPHDILRLQGVEALAKYISDEVQDVYRLQGVSINDKHIEVIVRQMLRRVQITNAGDSAFILGEQVERAEVLAENEKLITENKMPATYEYVLLGITKASLSTDSFISAASFQETTRVLTEASIMGKKDDLRGLKENVIVGRLIPAGTGLSFHNIRKKQRLSESTVYLDADLTENEIAE</sequence>
<comment type="function">
    <text evidence="1">DNA-dependent RNA polymerase catalyzes the transcription of DNA into RNA using the four ribonucleoside triphosphates as substrates.</text>
</comment>
<comment type="catalytic activity">
    <reaction evidence="1">
        <text>RNA(n) + a ribonucleoside 5'-triphosphate = RNA(n+1) + diphosphate</text>
        <dbReference type="Rhea" id="RHEA:21248"/>
        <dbReference type="Rhea" id="RHEA-COMP:14527"/>
        <dbReference type="Rhea" id="RHEA-COMP:17342"/>
        <dbReference type="ChEBI" id="CHEBI:33019"/>
        <dbReference type="ChEBI" id="CHEBI:61557"/>
        <dbReference type="ChEBI" id="CHEBI:140395"/>
        <dbReference type="EC" id="2.7.7.6"/>
    </reaction>
</comment>
<comment type="cofactor">
    <cofactor evidence="1">
        <name>Mg(2+)</name>
        <dbReference type="ChEBI" id="CHEBI:18420"/>
    </cofactor>
    <text evidence="1">Binds 1 Mg(2+) ion per subunit.</text>
</comment>
<comment type="cofactor">
    <cofactor evidence="1">
        <name>Zn(2+)</name>
        <dbReference type="ChEBI" id="CHEBI:29105"/>
    </cofactor>
    <text evidence="1">Binds 2 Zn(2+) ions per subunit.</text>
</comment>
<comment type="subunit">
    <text evidence="1">The RNAP catalytic core consists of 2 alpha, 1 beta, 1 beta' and 1 omega subunit. When a sigma factor is associated with the core the holoenzyme is formed, which can initiate transcription.</text>
</comment>
<comment type="similarity">
    <text evidence="1">Belongs to the RNA polymerase beta' chain family.</text>
</comment>
<feature type="chain" id="PRO_0000353397" description="DNA-directed RNA polymerase subunit beta'">
    <location>
        <begin position="1"/>
        <end position="1404"/>
    </location>
</feature>
<feature type="binding site" evidence="1">
    <location>
        <position position="70"/>
    </location>
    <ligand>
        <name>Zn(2+)</name>
        <dbReference type="ChEBI" id="CHEBI:29105"/>
        <label>1</label>
    </ligand>
</feature>
<feature type="binding site" evidence="1">
    <location>
        <position position="72"/>
    </location>
    <ligand>
        <name>Zn(2+)</name>
        <dbReference type="ChEBI" id="CHEBI:29105"/>
        <label>1</label>
    </ligand>
</feature>
<feature type="binding site" evidence="1">
    <location>
        <position position="85"/>
    </location>
    <ligand>
        <name>Zn(2+)</name>
        <dbReference type="ChEBI" id="CHEBI:29105"/>
        <label>1</label>
    </ligand>
</feature>
<feature type="binding site" evidence="1">
    <location>
        <position position="88"/>
    </location>
    <ligand>
        <name>Zn(2+)</name>
        <dbReference type="ChEBI" id="CHEBI:29105"/>
        <label>1</label>
    </ligand>
</feature>
<feature type="binding site" evidence="1">
    <location>
        <position position="460"/>
    </location>
    <ligand>
        <name>Mg(2+)</name>
        <dbReference type="ChEBI" id="CHEBI:18420"/>
    </ligand>
</feature>
<feature type="binding site" evidence="1">
    <location>
        <position position="462"/>
    </location>
    <ligand>
        <name>Mg(2+)</name>
        <dbReference type="ChEBI" id="CHEBI:18420"/>
    </ligand>
</feature>
<feature type="binding site" evidence="1">
    <location>
        <position position="464"/>
    </location>
    <ligand>
        <name>Mg(2+)</name>
        <dbReference type="ChEBI" id="CHEBI:18420"/>
    </ligand>
</feature>
<feature type="binding site" evidence="1">
    <location>
        <position position="825"/>
    </location>
    <ligand>
        <name>Zn(2+)</name>
        <dbReference type="ChEBI" id="CHEBI:29105"/>
        <label>2</label>
    </ligand>
</feature>
<feature type="binding site" evidence="1">
    <location>
        <position position="899"/>
    </location>
    <ligand>
        <name>Zn(2+)</name>
        <dbReference type="ChEBI" id="CHEBI:29105"/>
        <label>2</label>
    </ligand>
</feature>
<feature type="binding site" evidence="1">
    <location>
        <position position="906"/>
    </location>
    <ligand>
        <name>Zn(2+)</name>
        <dbReference type="ChEBI" id="CHEBI:29105"/>
        <label>2</label>
    </ligand>
</feature>
<feature type="binding site" evidence="1">
    <location>
        <position position="909"/>
    </location>
    <ligand>
        <name>Zn(2+)</name>
        <dbReference type="ChEBI" id="CHEBI:29105"/>
        <label>2</label>
    </ligand>
</feature>
<proteinExistence type="inferred from homology"/>
<accession>Q0AF54</accession>
<evidence type="ECO:0000255" key="1">
    <source>
        <dbReference type="HAMAP-Rule" id="MF_01322"/>
    </source>
</evidence>
<protein>
    <recommendedName>
        <fullName evidence="1">DNA-directed RNA polymerase subunit beta'</fullName>
        <shortName evidence="1">RNAP subunit beta'</shortName>
        <ecNumber evidence="1">2.7.7.6</ecNumber>
    </recommendedName>
    <alternativeName>
        <fullName evidence="1">RNA polymerase subunit beta'</fullName>
    </alternativeName>
    <alternativeName>
        <fullName evidence="1">Transcriptase subunit beta'</fullName>
    </alternativeName>
</protein>
<gene>
    <name evidence="1" type="primary">rpoC</name>
    <name type="ordered locus">Neut_1794</name>
</gene>
<name>RPOC_NITEC</name>